<feature type="chain" id="PRO_0000381021" description="8-amino-7-oxononanoate synthase">
    <location>
        <begin position="1"/>
        <end position="383"/>
    </location>
</feature>
<feature type="binding site" evidence="1">
    <location>
        <position position="27"/>
    </location>
    <ligand>
        <name>substrate</name>
    </ligand>
</feature>
<feature type="binding site" evidence="1">
    <location>
        <position position="34"/>
    </location>
    <ligand>
        <name>substrate</name>
    </ligand>
</feature>
<feature type="binding site" evidence="1">
    <location>
        <begin position="114"/>
        <end position="115"/>
    </location>
    <ligand>
        <name>pyridoxal 5'-phosphate</name>
        <dbReference type="ChEBI" id="CHEBI:597326"/>
    </ligand>
</feature>
<feature type="binding site" evidence="1">
    <location>
        <position position="139"/>
    </location>
    <ligand>
        <name>substrate</name>
    </ligand>
</feature>
<feature type="binding site" evidence="1">
    <location>
        <position position="187"/>
    </location>
    <ligand>
        <name>pyridoxal 5'-phosphate</name>
        <dbReference type="ChEBI" id="CHEBI:597326"/>
    </ligand>
</feature>
<feature type="binding site" evidence="1">
    <location>
        <begin position="212"/>
        <end position="215"/>
    </location>
    <ligand>
        <name>pyridoxal 5'-phosphate</name>
        <dbReference type="ChEBI" id="CHEBI:597326"/>
    </ligand>
</feature>
<feature type="binding site" evidence="1">
    <location>
        <begin position="232"/>
        <end position="235"/>
    </location>
    <ligand>
        <name>pyridoxal 5'-phosphate</name>
        <dbReference type="ChEBI" id="CHEBI:597326"/>
    </ligand>
</feature>
<feature type="binding site" evidence="1">
    <location>
        <position position="344"/>
    </location>
    <ligand>
        <name>substrate</name>
    </ligand>
</feature>
<feature type="modified residue" description="N6-(pyridoxal phosphate)lysine" evidence="1">
    <location>
        <position position="235"/>
    </location>
</feature>
<reference key="1">
    <citation type="submission" date="2008-12" db="EMBL/GenBank/DDBJ databases">
        <title>Complete sequence of chromosome of Methylobacterium chloromethanicum CM4.</title>
        <authorList>
            <consortium name="US DOE Joint Genome Institute"/>
            <person name="Lucas S."/>
            <person name="Copeland A."/>
            <person name="Lapidus A."/>
            <person name="Glavina del Rio T."/>
            <person name="Dalin E."/>
            <person name="Tice H."/>
            <person name="Bruce D."/>
            <person name="Goodwin L."/>
            <person name="Pitluck S."/>
            <person name="Chertkov O."/>
            <person name="Brettin T."/>
            <person name="Detter J.C."/>
            <person name="Han C."/>
            <person name="Larimer F."/>
            <person name="Land M."/>
            <person name="Hauser L."/>
            <person name="Kyrpides N."/>
            <person name="Mikhailova N."/>
            <person name="Marx C."/>
            <person name="Richardson P."/>
        </authorList>
    </citation>
    <scope>NUCLEOTIDE SEQUENCE [LARGE SCALE GENOMIC DNA]</scope>
    <source>
        <strain>CM4 / NCIMB 13688</strain>
    </source>
</reference>
<dbReference type="EC" id="2.3.1.47"/>
<dbReference type="EMBL" id="CP001298">
    <property type="protein sequence ID" value="ACK81735.1"/>
    <property type="molecule type" value="Genomic_DNA"/>
</dbReference>
<dbReference type="RefSeq" id="WP_012605834.1">
    <property type="nucleotide sequence ID" value="NC_011757.1"/>
</dbReference>
<dbReference type="SMR" id="B7L0L2"/>
<dbReference type="KEGG" id="mch:Mchl_0816"/>
<dbReference type="HOGENOM" id="CLU_015846_11_2_5"/>
<dbReference type="UniPathway" id="UPA00078"/>
<dbReference type="Proteomes" id="UP000002385">
    <property type="component" value="Chromosome"/>
</dbReference>
<dbReference type="GO" id="GO:0008710">
    <property type="term" value="F:8-amino-7-oxononanoate synthase activity"/>
    <property type="evidence" value="ECO:0007669"/>
    <property type="project" value="UniProtKB-EC"/>
</dbReference>
<dbReference type="GO" id="GO:0030170">
    <property type="term" value="F:pyridoxal phosphate binding"/>
    <property type="evidence" value="ECO:0007669"/>
    <property type="project" value="InterPro"/>
</dbReference>
<dbReference type="GO" id="GO:0009102">
    <property type="term" value="P:biotin biosynthetic process"/>
    <property type="evidence" value="ECO:0007669"/>
    <property type="project" value="UniProtKB-UniPathway"/>
</dbReference>
<dbReference type="Gene3D" id="3.90.1150.10">
    <property type="entry name" value="Aspartate Aminotransferase, domain 1"/>
    <property type="match status" value="1"/>
</dbReference>
<dbReference type="Gene3D" id="3.40.640.10">
    <property type="entry name" value="Type I PLP-dependent aspartate aminotransferase-like (Major domain)"/>
    <property type="match status" value="1"/>
</dbReference>
<dbReference type="InterPro" id="IPR004839">
    <property type="entry name" value="Aminotransferase_I/II_large"/>
</dbReference>
<dbReference type="InterPro" id="IPR050087">
    <property type="entry name" value="AON_synthase_class-II"/>
</dbReference>
<dbReference type="InterPro" id="IPR015424">
    <property type="entry name" value="PyrdxlP-dep_Trfase"/>
</dbReference>
<dbReference type="InterPro" id="IPR015421">
    <property type="entry name" value="PyrdxlP-dep_Trfase_major"/>
</dbReference>
<dbReference type="InterPro" id="IPR015422">
    <property type="entry name" value="PyrdxlP-dep_Trfase_small"/>
</dbReference>
<dbReference type="PANTHER" id="PTHR13693:SF100">
    <property type="entry name" value="8-AMINO-7-OXONONANOATE SYNTHASE"/>
    <property type="match status" value="1"/>
</dbReference>
<dbReference type="PANTHER" id="PTHR13693">
    <property type="entry name" value="CLASS II AMINOTRANSFERASE/8-AMINO-7-OXONONANOATE SYNTHASE"/>
    <property type="match status" value="1"/>
</dbReference>
<dbReference type="Pfam" id="PF00155">
    <property type="entry name" value="Aminotran_1_2"/>
    <property type="match status" value="1"/>
</dbReference>
<dbReference type="SUPFAM" id="SSF53383">
    <property type="entry name" value="PLP-dependent transferases"/>
    <property type="match status" value="1"/>
</dbReference>
<proteinExistence type="inferred from homology"/>
<gene>
    <name type="ordered locus">Mchl_0816</name>
</gene>
<organism>
    <name type="scientific">Methylorubrum extorquens (strain CM4 / NCIMB 13688)</name>
    <name type="common">Methylobacterium extorquens</name>
    <dbReference type="NCBI Taxonomy" id="440085"/>
    <lineage>
        <taxon>Bacteria</taxon>
        <taxon>Pseudomonadati</taxon>
        <taxon>Pseudomonadota</taxon>
        <taxon>Alphaproteobacteria</taxon>
        <taxon>Hyphomicrobiales</taxon>
        <taxon>Methylobacteriaceae</taxon>
        <taxon>Methylorubrum</taxon>
    </lineage>
</organism>
<name>BIOF_METC4</name>
<evidence type="ECO:0000250" key="1"/>
<evidence type="ECO:0000305" key="2"/>
<comment type="function">
    <text evidence="1">Catalyzes the decarboxylative condensation of pimeloyl-[acyl-carrier protein] and L-alanine to produce 8-amino-7-oxononanoate (AON), [acyl-carrier protein], and carbon dioxide.</text>
</comment>
<comment type="catalytic activity">
    <reaction>
        <text>6-carboxyhexanoyl-[ACP] + L-alanine + H(+) = (8S)-8-amino-7-oxononanoate + holo-[ACP] + CO2</text>
        <dbReference type="Rhea" id="RHEA:42288"/>
        <dbReference type="Rhea" id="RHEA-COMP:9685"/>
        <dbReference type="Rhea" id="RHEA-COMP:9955"/>
        <dbReference type="ChEBI" id="CHEBI:15378"/>
        <dbReference type="ChEBI" id="CHEBI:16526"/>
        <dbReference type="ChEBI" id="CHEBI:57972"/>
        <dbReference type="ChEBI" id="CHEBI:64479"/>
        <dbReference type="ChEBI" id="CHEBI:78846"/>
        <dbReference type="ChEBI" id="CHEBI:149468"/>
        <dbReference type="EC" id="2.3.1.47"/>
    </reaction>
</comment>
<comment type="cofactor">
    <cofactor evidence="1">
        <name>pyridoxal 5'-phosphate</name>
        <dbReference type="ChEBI" id="CHEBI:597326"/>
    </cofactor>
</comment>
<comment type="pathway">
    <text>Cofactor biosynthesis; biotin biosynthesis.</text>
</comment>
<comment type="subunit">
    <text evidence="1">Homodimer.</text>
</comment>
<comment type="similarity">
    <text evidence="2">Belongs to the class-II pyridoxal-phosphate-dependent aminotransferase family. BioF subfamily.</text>
</comment>
<accession>B7L0L2</accession>
<keyword id="KW-0012">Acyltransferase</keyword>
<keyword id="KW-0093">Biotin biosynthesis</keyword>
<keyword id="KW-0663">Pyridoxal phosphate</keyword>
<keyword id="KW-0808">Transferase</keyword>
<protein>
    <recommendedName>
        <fullName>8-amino-7-oxononanoate synthase</fullName>
        <shortName>AONS</shortName>
        <ecNumber>2.3.1.47</ecNumber>
    </recommendedName>
    <alternativeName>
        <fullName>7-keto-8-amino-pelargonic acid synthase</fullName>
        <shortName>7-KAP synthase</shortName>
        <shortName>KAPA synthase</shortName>
    </alternativeName>
    <alternativeName>
        <fullName>8-amino-7-ketopelargonate synthase</fullName>
    </alternativeName>
    <alternativeName>
        <fullName>Alpha-oxoamine synthase</fullName>
    </alternativeName>
</protein>
<sequence length="383" mass="39617">MSPNPSNSLDAFAGEKLAGLEASALRRRLAVTARGPEAAAERGGRSLVSFSCNDYLGLAHDPRVIAAATEALARYGAGAGASRLVTGNSPPLAALEERLARHKGKEAALVFGSGYLANLGIAPALVGAGDLILIDELGHSCLFAGAAMSRAQTVRFAHNDVAQLRALLAEHRGTARRALILTERVFSMDGDRAPLPEILALAGEYDAWTLVDDAHGLGVVEPGQRAPLEMGTLSKTLGSYGGYLCASQPVIDLLTSRARSLVYTTGLPPASAAAALKALDIVETEPERAARPLALARRFTARLGLPEAMSPIVPVLIGAAEAALALSTALEARGFLVVAIRPPTVAPGTARLRVAFSAAHDEGQVDALAEALIELAPESVRAG</sequence>